<organism>
    <name type="scientific">Mycobacterium tuberculosis (strain ATCC 25618 / H37Rv)</name>
    <dbReference type="NCBI Taxonomy" id="83332"/>
    <lineage>
        <taxon>Bacteria</taxon>
        <taxon>Bacillati</taxon>
        <taxon>Actinomycetota</taxon>
        <taxon>Actinomycetes</taxon>
        <taxon>Mycobacteriales</taxon>
        <taxon>Mycobacteriaceae</taxon>
        <taxon>Mycobacterium</taxon>
        <taxon>Mycobacterium tuberculosis complex</taxon>
    </lineage>
</organism>
<proteinExistence type="evidence at protein level"/>
<dbReference type="EC" id="3.6.-.-"/>
<dbReference type="EMBL" id="AL123456">
    <property type="protein sequence ID" value="CCP44257.1"/>
    <property type="status" value="ALT_INIT"/>
    <property type="molecule type" value="Genomic_DNA"/>
</dbReference>
<dbReference type="PIR" id="C70712">
    <property type="entry name" value="C70712"/>
</dbReference>
<dbReference type="RefSeq" id="NP_216012.1">
    <property type="nucleotide sequence ID" value="NC_000962.3"/>
</dbReference>
<dbReference type="PDB" id="3MD0">
    <property type="method" value="X-ray"/>
    <property type="resolution" value="2.45 A"/>
    <property type="chains" value="A=3-336"/>
</dbReference>
<dbReference type="PDB" id="3P32">
    <property type="method" value="X-ray"/>
    <property type="resolution" value="1.90 A"/>
    <property type="chains" value="A=3-336"/>
</dbReference>
<dbReference type="PDB" id="4GT1">
    <property type="method" value="X-ray"/>
    <property type="resolution" value="2.00 A"/>
    <property type="chains" value="A=3-336"/>
</dbReference>
<dbReference type="PDBsum" id="3MD0"/>
<dbReference type="PDBsum" id="3P32"/>
<dbReference type="PDBsum" id="4GT1"/>
<dbReference type="SMR" id="P9WPZ1"/>
<dbReference type="FunCoup" id="P9WPZ1">
    <property type="interactions" value="83"/>
</dbReference>
<dbReference type="STRING" id="83332.Rv1496"/>
<dbReference type="PaxDb" id="83332-Rv1496"/>
<dbReference type="DNASU" id="886496"/>
<dbReference type="GeneID" id="886496"/>
<dbReference type="KEGG" id="mtu:Rv1496"/>
<dbReference type="TubercuList" id="Rv1496"/>
<dbReference type="eggNOG" id="COG1703">
    <property type="taxonomic scope" value="Bacteria"/>
</dbReference>
<dbReference type="InParanoid" id="P9WPZ1"/>
<dbReference type="OrthoDB" id="9778292at2"/>
<dbReference type="PhylomeDB" id="P9WPZ1"/>
<dbReference type="EvolutionaryTrace" id="P9WPZ1"/>
<dbReference type="Proteomes" id="UP000001584">
    <property type="component" value="Chromosome"/>
</dbReference>
<dbReference type="GO" id="GO:0005737">
    <property type="term" value="C:cytoplasm"/>
    <property type="evidence" value="ECO:0000318"/>
    <property type="project" value="GO_Central"/>
</dbReference>
<dbReference type="GO" id="GO:0005524">
    <property type="term" value="F:ATP binding"/>
    <property type="evidence" value="ECO:0007669"/>
    <property type="project" value="UniProtKB-KW"/>
</dbReference>
<dbReference type="GO" id="GO:0005525">
    <property type="term" value="F:GTP binding"/>
    <property type="evidence" value="ECO:0007669"/>
    <property type="project" value="UniProtKB-KW"/>
</dbReference>
<dbReference type="GO" id="GO:0003924">
    <property type="term" value="F:GTPase activity"/>
    <property type="evidence" value="ECO:0000318"/>
    <property type="project" value="GO_Central"/>
</dbReference>
<dbReference type="CDD" id="cd03114">
    <property type="entry name" value="MMAA-like"/>
    <property type="match status" value="1"/>
</dbReference>
<dbReference type="Gene3D" id="1.10.287.130">
    <property type="match status" value="1"/>
</dbReference>
<dbReference type="Gene3D" id="1.20.5.170">
    <property type="match status" value="1"/>
</dbReference>
<dbReference type="Gene3D" id="3.40.50.300">
    <property type="entry name" value="P-loop containing nucleotide triphosphate hydrolases"/>
    <property type="match status" value="1"/>
</dbReference>
<dbReference type="InterPro" id="IPR005129">
    <property type="entry name" value="GTPase_ArgK"/>
</dbReference>
<dbReference type="InterPro" id="IPR027417">
    <property type="entry name" value="P-loop_NTPase"/>
</dbReference>
<dbReference type="NCBIfam" id="TIGR00750">
    <property type="entry name" value="lao"/>
    <property type="match status" value="1"/>
</dbReference>
<dbReference type="NCBIfam" id="NF006958">
    <property type="entry name" value="PRK09435.1"/>
    <property type="match status" value="1"/>
</dbReference>
<dbReference type="PANTHER" id="PTHR23408:SF3">
    <property type="entry name" value="METHYLMALONIC ACIDURIA TYPE A PROTEIN, MITOCHONDRIAL"/>
    <property type="match status" value="1"/>
</dbReference>
<dbReference type="PANTHER" id="PTHR23408">
    <property type="entry name" value="METHYLMALONYL-COA MUTASE"/>
    <property type="match status" value="1"/>
</dbReference>
<dbReference type="Pfam" id="PF03308">
    <property type="entry name" value="MeaB"/>
    <property type="match status" value="1"/>
</dbReference>
<dbReference type="SUPFAM" id="SSF52540">
    <property type="entry name" value="P-loop containing nucleoside triphosphate hydrolases"/>
    <property type="match status" value="1"/>
</dbReference>
<name>Y1496_MYCTU</name>
<sequence>MAMMAASHDDDTVDGLATAVRGGDRAALPRAITLVESTRPDHREQAQQLLLRLLPDSGNAHRVGITGVPGVGKSTAIEALGMHLIERGHRVAVLAVDPSSTRTGGSILGDKTRMARLAVHPNAYIRPSPTSGTLGGVTRATRETVVLLEAAGFDVILIETVGVGQSEVAVANMVDTFVLLTLARTGDQLQGIKKGVLELADIVVVNKADGEHHKEARLAARELSAAIRLIYPREALWRPPVLTMSAVEGRGLAELWDTVERHRQVLTGAGEFDARRRDQQVDWTWQLVRDAVLDRVWSNPTVRKVRSELERRVRAGELTPALAAQQILEIANLTDR</sequence>
<comment type="function">
    <text evidence="3">Probable GTPase. May also bind and hydrolyze ATP. May function as chaperone (Probable).</text>
</comment>
<comment type="subunit">
    <text evidence="2">Homodimer.</text>
</comment>
<comment type="similarity">
    <text evidence="3">Belongs to the SIMIBI class G3E GTPase family. ArgK/MeaB subfamily.</text>
</comment>
<comment type="sequence caution" evidence="1">
    <conflict type="erroneous initiation">
        <sequence resource="EMBL-CDS" id="CCP44257"/>
    </conflict>
    <text>Truncated N-terminus.</text>
</comment>
<reference key="1">
    <citation type="journal article" date="1998" name="Nature">
        <title>Deciphering the biology of Mycobacterium tuberculosis from the complete genome sequence.</title>
        <authorList>
            <person name="Cole S.T."/>
            <person name="Brosch R."/>
            <person name="Parkhill J."/>
            <person name="Garnier T."/>
            <person name="Churcher C.M."/>
            <person name="Harris D.E."/>
            <person name="Gordon S.V."/>
            <person name="Eiglmeier K."/>
            <person name="Gas S."/>
            <person name="Barry C.E. III"/>
            <person name="Tekaia F."/>
            <person name="Badcock K."/>
            <person name="Basham D."/>
            <person name="Brown D."/>
            <person name="Chillingworth T."/>
            <person name="Connor R."/>
            <person name="Davies R.M."/>
            <person name="Devlin K."/>
            <person name="Feltwell T."/>
            <person name="Gentles S."/>
            <person name="Hamlin N."/>
            <person name="Holroyd S."/>
            <person name="Hornsby T."/>
            <person name="Jagels K."/>
            <person name="Krogh A."/>
            <person name="McLean J."/>
            <person name="Moule S."/>
            <person name="Murphy L.D."/>
            <person name="Oliver S."/>
            <person name="Osborne J."/>
            <person name="Quail M.A."/>
            <person name="Rajandream M.A."/>
            <person name="Rogers J."/>
            <person name="Rutter S."/>
            <person name="Seeger K."/>
            <person name="Skelton S."/>
            <person name="Squares S."/>
            <person name="Squares R."/>
            <person name="Sulston J.E."/>
            <person name="Taylor K."/>
            <person name="Whitehead S."/>
            <person name="Barrell B.G."/>
        </authorList>
    </citation>
    <scope>NUCLEOTIDE SEQUENCE [LARGE SCALE GENOMIC DNA]</scope>
    <source>
        <strain>ATCC 25618 / H37Rv</strain>
    </source>
</reference>
<reference key="2">
    <citation type="journal article" date="2022" name="Genomics">
        <title>Deep N-terminomics of Mycobacterium tuberculosis H37Rv extensively correct annotated encoding genes.</title>
        <authorList>
            <person name="Shi J."/>
            <person name="Meng S."/>
            <person name="Wan L."/>
            <person name="Zhang Z."/>
            <person name="Jiang S."/>
            <person name="Zhu H."/>
            <person name="Dai E."/>
            <person name="Chang L."/>
            <person name="Gao H."/>
            <person name="Wan K."/>
            <person name="Zhang L."/>
            <person name="Zhao X."/>
            <person name="Liu H."/>
            <person name="Lyu Z."/>
            <person name="Zhang Y."/>
            <person name="Xu P."/>
        </authorList>
    </citation>
    <scope>PROTEIN SEQUENCE OF 2-21</scope>
    <scope>SEQUENCE REVISION TO N-TERMINUS</scope>
    <source>
        <strain>H37Rv</strain>
    </source>
</reference>
<reference key="3">
    <citation type="journal article" date="2011" name="Mol. Cell. Proteomics">
        <title>Proteogenomic analysis of Mycobacterium tuberculosis by high resolution mass spectrometry.</title>
        <authorList>
            <person name="Kelkar D.S."/>
            <person name="Kumar D."/>
            <person name="Kumar P."/>
            <person name="Balakrishnan L."/>
            <person name="Muthusamy B."/>
            <person name="Yadav A.K."/>
            <person name="Shrivastava P."/>
            <person name="Marimuthu A."/>
            <person name="Anand S."/>
            <person name="Sundaram H."/>
            <person name="Kingsbury R."/>
            <person name="Harsha H.C."/>
            <person name="Nair B."/>
            <person name="Prasad T.S."/>
            <person name="Chauhan D.S."/>
            <person name="Katoch K."/>
            <person name="Katoch V.M."/>
            <person name="Kumar P."/>
            <person name="Chaerkady R."/>
            <person name="Ramachandran S."/>
            <person name="Dash D."/>
            <person name="Pandey A."/>
        </authorList>
    </citation>
    <scope>IDENTIFICATION BY MASS SPECTROMETRY [LARGE SCALE ANALYSIS]</scope>
    <source>
        <strain>ATCC 25618 / H37Rv</strain>
    </source>
</reference>
<reference key="4">
    <citation type="submission" date="2010-04" db="PDB data bank">
        <title>Crystal structure of arginine/ornithine transport system ATPase from Mycobacterium tuberculosis bound to GDP.</title>
        <authorList>
            <consortium name="Seattle structural genomics center for infectious disease (SSGCID)"/>
        </authorList>
    </citation>
    <scope>X-RAY CRYSTALLOGRAPHY (2.45 ANGSTROMS) IN COMPLEX WITH GDP</scope>
    <scope>PROBABLE FUNCTION</scope>
    <scope>SUBUNIT</scope>
</reference>
<feature type="initiator methionine" description="Removed" evidence="1">
    <location>
        <position position="1"/>
    </location>
</feature>
<feature type="chain" id="PRO_0000157817" description="Probable GTPase Rv1496">
    <location>
        <begin position="2"/>
        <end position="336"/>
    </location>
</feature>
<feature type="binding site">
    <location>
        <begin position="67"/>
        <end position="75"/>
    </location>
    <ligand>
        <name>GTP</name>
        <dbReference type="ChEBI" id="CHEBI:37565"/>
    </ligand>
</feature>
<feature type="binding site">
    <location>
        <position position="209"/>
    </location>
    <ligand>
        <name>GTP</name>
        <dbReference type="ChEBI" id="CHEBI:37565"/>
    </ligand>
</feature>
<feature type="binding site">
    <location>
        <begin position="245"/>
        <end position="247"/>
    </location>
    <ligand>
        <name>GTP</name>
        <dbReference type="ChEBI" id="CHEBI:37565"/>
    </ligand>
</feature>
<feature type="helix" evidence="4">
    <location>
        <begin position="13"/>
        <end position="21"/>
    </location>
</feature>
<feature type="helix" evidence="4">
    <location>
        <begin position="27"/>
        <end position="36"/>
    </location>
</feature>
<feature type="helix" evidence="4">
    <location>
        <begin position="40"/>
        <end position="53"/>
    </location>
</feature>
<feature type="helix" evidence="4">
    <location>
        <begin position="54"/>
        <end position="56"/>
    </location>
</feature>
<feature type="strand" evidence="4">
    <location>
        <begin position="60"/>
        <end position="66"/>
    </location>
</feature>
<feature type="helix" evidence="4">
    <location>
        <begin position="73"/>
        <end position="85"/>
    </location>
</feature>
<feature type="turn" evidence="4">
    <location>
        <begin position="86"/>
        <end position="88"/>
    </location>
</feature>
<feature type="strand" evidence="4">
    <location>
        <begin position="91"/>
        <end position="96"/>
    </location>
</feature>
<feature type="helix" evidence="4">
    <location>
        <begin position="115"/>
        <end position="118"/>
    </location>
</feature>
<feature type="strand" evidence="4">
    <location>
        <begin position="123"/>
        <end position="126"/>
    </location>
</feature>
<feature type="helix" evidence="4">
    <location>
        <begin position="134"/>
        <end position="150"/>
    </location>
</feature>
<feature type="strand" evidence="4">
    <location>
        <begin position="155"/>
        <end position="160"/>
    </location>
</feature>
<feature type="helix" evidence="4">
    <location>
        <begin position="166"/>
        <end position="171"/>
    </location>
</feature>
<feature type="strand" evidence="4">
    <location>
        <begin position="175"/>
        <end position="184"/>
    </location>
</feature>
<feature type="turn" evidence="4">
    <location>
        <begin position="188"/>
        <end position="191"/>
    </location>
</feature>
<feature type="helix" evidence="4">
    <location>
        <begin position="197"/>
        <end position="199"/>
    </location>
</feature>
<feature type="strand" evidence="4">
    <location>
        <begin position="201"/>
        <end position="206"/>
    </location>
</feature>
<feature type="helix" evidence="4">
    <location>
        <begin position="210"/>
        <end position="212"/>
    </location>
</feature>
<feature type="helix" evidence="4">
    <location>
        <begin position="213"/>
        <end position="230"/>
    </location>
</feature>
<feature type="strand" evidence="4">
    <location>
        <begin position="241"/>
        <end position="245"/>
    </location>
</feature>
<feature type="helix" evidence="4">
    <location>
        <begin position="246"/>
        <end position="248"/>
    </location>
</feature>
<feature type="helix" evidence="4">
    <location>
        <begin position="252"/>
        <end position="268"/>
    </location>
</feature>
<feature type="helix" evidence="4">
    <location>
        <begin position="271"/>
        <end position="297"/>
    </location>
</feature>
<feature type="helix" evidence="4">
    <location>
        <begin position="300"/>
        <end position="314"/>
    </location>
</feature>
<feature type="helix" evidence="4">
    <location>
        <begin position="320"/>
        <end position="334"/>
    </location>
</feature>
<protein>
    <recommendedName>
        <fullName>Probable GTPase Rv1496</fullName>
        <ecNumber>3.6.-.-</ecNumber>
    </recommendedName>
</protein>
<gene>
    <name type="ordered locus">Rv1496</name>
    <name type="ORF">MTCY277.18</name>
</gene>
<keyword id="KW-0002">3D-structure</keyword>
<keyword id="KW-0067">ATP-binding</keyword>
<keyword id="KW-0143">Chaperone</keyword>
<keyword id="KW-0903">Direct protein sequencing</keyword>
<keyword id="KW-0342">GTP-binding</keyword>
<keyword id="KW-0378">Hydrolase</keyword>
<keyword id="KW-0547">Nucleotide-binding</keyword>
<keyword id="KW-1185">Reference proteome</keyword>
<accession>P9WPZ1</accession>
<accession>L0T711</accession>
<accession>P63577</accession>
<accession>P71777</accession>
<evidence type="ECO:0000269" key="1">
    <source>
    </source>
</evidence>
<evidence type="ECO:0000269" key="2">
    <source ref="4"/>
</evidence>
<evidence type="ECO:0000305" key="3"/>
<evidence type="ECO:0007829" key="4">
    <source>
        <dbReference type="PDB" id="3P32"/>
    </source>
</evidence>